<feature type="chain" id="PRO_1000131657" description="Chaperone protein HscA homolog">
    <location>
        <begin position="1"/>
        <end position="620"/>
    </location>
</feature>
<accession>B0VNV8</accession>
<sequence>MPLLQIAEPGQSSAPHQHRIAIGIDLGTTHSLAATVLSGKPKVLNDVQNRRLLPSIVHYGDNTTHYGEEAKPFIIADPKNTIVSVKRFMGRSKADIKFQHPYELVGSEKNEMPAFETRAGRKTPVEISAEILKQLKDRAEDSLQNPVNGAVITVPAYFDEAQRQATRYAAQLAGLNILRLLNEPTAAAVAYGLDQESNLATDRNYVIYDLGGGTFDVSILRFSQGVFEVLATGGHTALGGDDLDRLIVKWAKKQLNIDVLSDEDYAVFIVAARQAKEQLSTQDSVELKLLEATLTLDRPTFESIIQVALDKTISVCKRVLRDAKLELTDIQNVVLVGGSTRSYAVQKAVREVFAQEPLCTINPDEVVAIGASITANQLIGNSQDGSLLLDVTPLSLGLETMGGLVERLISRNTAIPVARRQEFTTYQDGQTAMLIHVVQGERDLVEHCRSLGRFVLHGIPPMTAGQARIEVTFQVDADGLLTVSAREATSGVQAHIDIKPSYGLSEADTERLLIEGFQHAEEDKNLRHLKETKVEAERELEALEQALKVDADLLDEKQLEALNSAKESLKAQLEGSDIQAIEQAVQQLKVHSDAFAALRMNRHIDHALKGTKLDDWSKSN</sequence>
<comment type="function">
    <text evidence="1">Chaperone involved in the maturation of iron-sulfur cluster-containing proteins. Has a low intrinsic ATPase activity which is markedly stimulated by HscB.</text>
</comment>
<comment type="similarity">
    <text evidence="1">Belongs to the heat shock protein 70 family.</text>
</comment>
<dbReference type="EMBL" id="CU468230">
    <property type="protein sequence ID" value="CAP01186.1"/>
    <property type="molecule type" value="Genomic_DNA"/>
</dbReference>
<dbReference type="SMR" id="B0VNV8"/>
<dbReference type="KEGG" id="abm:ABSDF1849"/>
<dbReference type="HOGENOM" id="CLU_005965_2_1_6"/>
<dbReference type="Proteomes" id="UP000001741">
    <property type="component" value="Chromosome"/>
</dbReference>
<dbReference type="GO" id="GO:0005524">
    <property type="term" value="F:ATP binding"/>
    <property type="evidence" value="ECO:0007669"/>
    <property type="project" value="UniProtKB-KW"/>
</dbReference>
<dbReference type="GO" id="GO:0016887">
    <property type="term" value="F:ATP hydrolysis activity"/>
    <property type="evidence" value="ECO:0007669"/>
    <property type="project" value="UniProtKB-UniRule"/>
</dbReference>
<dbReference type="GO" id="GO:0140662">
    <property type="term" value="F:ATP-dependent protein folding chaperone"/>
    <property type="evidence" value="ECO:0007669"/>
    <property type="project" value="InterPro"/>
</dbReference>
<dbReference type="GO" id="GO:0051082">
    <property type="term" value="F:unfolded protein binding"/>
    <property type="evidence" value="ECO:0007669"/>
    <property type="project" value="InterPro"/>
</dbReference>
<dbReference type="GO" id="GO:0016226">
    <property type="term" value="P:iron-sulfur cluster assembly"/>
    <property type="evidence" value="ECO:0007669"/>
    <property type="project" value="InterPro"/>
</dbReference>
<dbReference type="CDD" id="cd10236">
    <property type="entry name" value="ASKHA_NBD_HSP70_HscA"/>
    <property type="match status" value="1"/>
</dbReference>
<dbReference type="FunFam" id="3.30.420.40:FF:000046">
    <property type="entry name" value="Chaperone protein HscA"/>
    <property type="match status" value="1"/>
</dbReference>
<dbReference type="Gene3D" id="1.20.1270.10">
    <property type="match status" value="1"/>
</dbReference>
<dbReference type="Gene3D" id="3.30.420.40">
    <property type="match status" value="2"/>
</dbReference>
<dbReference type="Gene3D" id="3.90.640.10">
    <property type="entry name" value="Actin, Chain A, domain 4"/>
    <property type="match status" value="1"/>
</dbReference>
<dbReference type="Gene3D" id="2.60.34.10">
    <property type="entry name" value="Substrate Binding Domain Of DNAk, Chain A, domain 1"/>
    <property type="match status" value="1"/>
</dbReference>
<dbReference type="HAMAP" id="MF_00679">
    <property type="entry name" value="HscA"/>
    <property type="match status" value="1"/>
</dbReference>
<dbReference type="InterPro" id="IPR043129">
    <property type="entry name" value="ATPase_NBD"/>
</dbReference>
<dbReference type="InterPro" id="IPR018181">
    <property type="entry name" value="Heat_shock_70_CS"/>
</dbReference>
<dbReference type="InterPro" id="IPR042039">
    <property type="entry name" value="HscA_NBD"/>
</dbReference>
<dbReference type="InterPro" id="IPR029048">
    <property type="entry name" value="HSP70_C_sf"/>
</dbReference>
<dbReference type="InterPro" id="IPR029047">
    <property type="entry name" value="HSP70_peptide-bd_sf"/>
</dbReference>
<dbReference type="InterPro" id="IPR013126">
    <property type="entry name" value="Hsp_70_fam"/>
</dbReference>
<dbReference type="InterPro" id="IPR010236">
    <property type="entry name" value="ISC_FeS_clus_asmbl_HscA"/>
</dbReference>
<dbReference type="NCBIfam" id="TIGR01991">
    <property type="entry name" value="HscA"/>
    <property type="match status" value="1"/>
</dbReference>
<dbReference type="NCBIfam" id="NF003520">
    <property type="entry name" value="PRK05183.1"/>
    <property type="match status" value="1"/>
</dbReference>
<dbReference type="PANTHER" id="PTHR19375">
    <property type="entry name" value="HEAT SHOCK PROTEIN 70KDA"/>
    <property type="match status" value="1"/>
</dbReference>
<dbReference type="Pfam" id="PF00012">
    <property type="entry name" value="HSP70"/>
    <property type="match status" value="1"/>
</dbReference>
<dbReference type="PRINTS" id="PR00301">
    <property type="entry name" value="HEATSHOCK70"/>
</dbReference>
<dbReference type="SUPFAM" id="SSF53067">
    <property type="entry name" value="Actin-like ATPase domain"/>
    <property type="match status" value="2"/>
</dbReference>
<dbReference type="SUPFAM" id="SSF100934">
    <property type="entry name" value="Heat shock protein 70kD (HSP70), C-terminal subdomain"/>
    <property type="match status" value="1"/>
</dbReference>
<dbReference type="SUPFAM" id="SSF100920">
    <property type="entry name" value="Heat shock protein 70kD (HSP70), peptide-binding domain"/>
    <property type="match status" value="1"/>
</dbReference>
<dbReference type="PROSITE" id="PS00297">
    <property type="entry name" value="HSP70_1"/>
    <property type="match status" value="1"/>
</dbReference>
<dbReference type="PROSITE" id="PS00329">
    <property type="entry name" value="HSP70_2"/>
    <property type="match status" value="1"/>
</dbReference>
<gene>
    <name evidence="1" type="primary">hscA</name>
    <name type="ordered locus">ABSDF1849</name>
</gene>
<protein>
    <recommendedName>
        <fullName evidence="1">Chaperone protein HscA homolog</fullName>
    </recommendedName>
</protein>
<evidence type="ECO:0000255" key="1">
    <source>
        <dbReference type="HAMAP-Rule" id="MF_00679"/>
    </source>
</evidence>
<name>HSCA_ACIBS</name>
<keyword id="KW-0067">ATP-binding</keyword>
<keyword id="KW-0143">Chaperone</keyword>
<keyword id="KW-0547">Nucleotide-binding</keyword>
<keyword id="KW-0346">Stress response</keyword>
<proteinExistence type="inferred from homology"/>
<reference key="1">
    <citation type="journal article" date="2008" name="PLoS ONE">
        <title>Comparative analysis of Acinetobacters: three genomes for three lifestyles.</title>
        <authorList>
            <person name="Vallenet D."/>
            <person name="Nordmann P."/>
            <person name="Barbe V."/>
            <person name="Poirel L."/>
            <person name="Mangenot S."/>
            <person name="Bataille E."/>
            <person name="Dossat C."/>
            <person name="Gas S."/>
            <person name="Kreimeyer A."/>
            <person name="Lenoble P."/>
            <person name="Oztas S."/>
            <person name="Poulain J."/>
            <person name="Segurens B."/>
            <person name="Robert C."/>
            <person name="Abergel C."/>
            <person name="Claverie J.-M."/>
            <person name="Raoult D."/>
            <person name="Medigue C."/>
            <person name="Weissenbach J."/>
            <person name="Cruveiller S."/>
        </authorList>
    </citation>
    <scope>NUCLEOTIDE SEQUENCE [LARGE SCALE GENOMIC DNA]</scope>
    <source>
        <strain>SDF</strain>
    </source>
</reference>
<organism>
    <name type="scientific">Acinetobacter baumannii (strain SDF)</name>
    <dbReference type="NCBI Taxonomy" id="509170"/>
    <lineage>
        <taxon>Bacteria</taxon>
        <taxon>Pseudomonadati</taxon>
        <taxon>Pseudomonadota</taxon>
        <taxon>Gammaproteobacteria</taxon>
        <taxon>Moraxellales</taxon>
        <taxon>Moraxellaceae</taxon>
        <taxon>Acinetobacter</taxon>
        <taxon>Acinetobacter calcoaceticus/baumannii complex</taxon>
    </lineage>
</organism>